<gene>
    <name type="primary">UL122</name>
</gene>
<keyword id="KW-0010">Activator</keyword>
<keyword id="KW-0238">DNA-binding</keyword>
<keyword id="KW-0244">Early protein</keyword>
<keyword id="KW-1077">G0/G1 host cell cycle checkpoint dysregulation by virus</keyword>
<keyword id="KW-1078">G1/S host cell cycle checkpoint dysregulation by virus</keyword>
<keyword id="KW-1048">Host nucleus</keyword>
<keyword id="KW-0945">Host-virus interaction</keyword>
<keyword id="KW-1017">Isopeptide bond</keyword>
<keyword id="KW-0479">Metal-binding</keyword>
<keyword id="KW-1121">Modulation of host cell cycle by virus</keyword>
<keyword id="KW-0597">Phosphoprotein</keyword>
<keyword id="KW-0804">Transcription</keyword>
<keyword id="KW-0805">Transcription regulation</keyword>
<keyword id="KW-0832">Ubl conjugation</keyword>
<accession>Q6SWP7</accession>
<dbReference type="EMBL" id="FJ616285">
    <property type="protein sequence ID" value="AAR31449.1"/>
    <property type="molecule type" value="Genomic_DNA"/>
</dbReference>
<dbReference type="SMR" id="Q6SWP7"/>
<dbReference type="Proteomes" id="UP000006907">
    <property type="component" value="Segment"/>
</dbReference>
<dbReference type="GO" id="GO:0042025">
    <property type="term" value="C:host cell nucleus"/>
    <property type="evidence" value="ECO:0007669"/>
    <property type="project" value="UniProtKB-SubCell"/>
</dbReference>
<dbReference type="GO" id="GO:0003677">
    <property type="term" value="F:DNA binding"/>
    <property type="evidence" value="ECO:0007669"/>
    <property type="project" value="UniProtKB-KW"/>
</dbReference>
<dbReference type="GO" id="GO:0046872">
    <property type="term" value="F:metal ion binding"/>
    <property type="evidence" value="ECO:0007669"/>
    <property type="project" value="UniProtKB-KW"/>
</dbReference>
<dbReference type="GO" id="GO:0039695">
    <property type="term" value="P:DNA-templated viral transcription"/>
    <property type="evidence" value="ECO:0000314"/>
    <property type="project" value="UniProtKB"/>
</dbReference>
<dbReference type="GO" id="GO:0006355">
    <property type="term" value="P:regulation of DNA-templated transcription"/>
    <property type="evidence" value="ECO:0007669"/>
    <property type="project" value="InterPro"/>
</dbReference>
<dbReference type="GO" id="GO:0039646">
    <property type="term" value="P:symbiont-mediated perturbation of host cell cycle G0/G1 transition checkpoint"/>
    <property type="evidence" value="ECO:0007669"/>
    <property type="project" value="UniProtKB-KW"/>
</dbReference>
<dbReference type="GO" id="GO:0039645">
    <property type="term" value="P:symbiont-mediated perturbation of host cell cycle G1/S transition checkpoint"/>
    <property type="evidence" value="ECO:0007669"/>
    <property type="project" value="UniProtKB-KW"/>
</dbReference>
<dbReference type="InterPro" id="IPR010855">
    <property type="entry name" value="Cytomega_IE1/IE2"/>
</dbReference>
<dbReference type="InterPro" id="IPR005028">
    <property type="entry name" value="Herpes_IE2_3"/>
</dbReference>
<dbReference type="Pfam" id="PF07340">
    <property type="entry name" value="Herpes_IE1"/>
    <property type="match status" value="1"/>
</dbReference>
<dbReference type="Pfam" id="PF03361">
    <property type="entry name" value="Herpes_IE2_3"/>
    <property type="match status" value="1"/>
</dbReference>
<sequence length="579" mass="62816">MESSAKRKMDPDNPDEGPSSKVPRPETPVTKATTFLQTMLRKEVNSQLSLGDPLFPELAEESLKTFERVTEDCNENPEKDVLAELGDILAQAVNHAGIDSSSTGPTLTTHSCSVSSAPLNKPTPTSVAVTNTPLPGASATPELSPRKKPRKTTRPFKVIIKPPVPPAPIMLPLIKQEDIKPEPDFTIQYRNKIIDTAGCIVISDSEEEQGEEVETRGATASSPSTGSGTPRVTSPTHPLSQMNHPPLPDPLGRPDEDSSSSSSSCSSASDSESESEEMKCSSGGGASVTSSHHGRGGFGGAASSSLLSCGHQSSGGASTGPRKKKSKRISELDNEKVRNIMKDKNTPFCTPNVQTRRGRVKIDEVSRMFRNTNRSLEYKNLPFTIPSMHQVLDEAIKACKTMQVNNKGIQIIYTRNHEVKSEVDAVRCRLGTMCNLALSTPFLMEHTMPVTHPPEVAQRTADACNEGVKAAWSLKELHTHQLCPRSSDYRNMIIHAATPVDLLGALNLCLPLMQKFPKQVMVRIFSTNQGGFMLPIYETAAKAYAVGQFEQPTETPPEDLDTLSLAIEAAIQDLRNKSQ</sequence>
<reference key="1">
    <citation type="journal article" date="2004" name="J. Gen. Virol.">
        <title>Genetic content of wild-type human cytomegalovirus.</title>
        <authorList>
            <person name="Dolan A."/>
            <person name="Cunningham C."/>
            <person name="Hector R.D."/>
            <person name="Hassan-Walker A.F."/>
            <person name="Lee L."/>
            <person name="Addison C."/>
            <person name="Dargan D.J."/>
            <person name="McGeoch D.J."/>
            <person name="Gatherer D."/>
            <person name="Emery V.C."/>
            <person name="Griffiths P.D."/>
            <person name="Sinzger C."/>
            <person name="McSharry B.P."/>
            <person name="Wilkinson G.W.G."/>
            <person name="Davison A.J."/>
        </authorList>
    </citation>
    <scope>NUCLEOTIDE SEQUENCE [LARGE SCALE GENOMIC DNA]</scope>
    <source>
        <strain>Towne</strain>
    </source>
</reference>
<reference key="2">
    <citation type="journal article" date="2009" name="J. Gen. Virol.">
        <title>High-throughput sequence analysis of variants of human cytomegalovirus strains Towne and AD169.</title>
        <authorList>
            <person name="Bradley A.J."/>
            <person name="Lurain N.S."/>
            <person name="Ghazal P."/>
            <person name="Trivedi U."/>
            <person name="Cunningham C."/>
            <person name="Baluchova K."/>
            <person name="Gatherer D."/>
            <person name="Wilkinson G.W."/>
            <person name="Dargan D.J."/>
            <person name="Davison A.J."/>
        </authorList>
    </citation>
    <scope>NUCLEOTIDE SEQUENCE [LARGE SCALE GENOMIC DNA]</scope>
    <source>
        <strain>Towne</strain>
    </source>
</reference>
<reference key="3">
    <citation type="journal article" date="1993" name="J. Gen. Virol.">
        <title>The human cytomegalovirus 86K immediate early (IE) 2 protein requires the basic region of the TATA-box binding protein (TBP) for binding, and interacts with TBP and transcription factor TFIIB via regions of IE2 required for transcriptional regulation.</title>
        <authorList>
            <person name="Caswell R."/>
            <person name="Hagemeier C."/>
            <person name="Chiou C.J."/>
            <person name="Hayward G."/>
            <person name="Kouzarides T."/>
            <person name="Sinclair J."/>
        </authorList>
    </citation>
    <scope>INTERACTION WITH HOST TBP AND TF2B</scope>
</reference>
<reference key="4">
    <citation type="journal article" date="1997" name="J. Virol.">
        <title>The major immediate-early proteins IE1 and IE2 of human cytomegalovirus colocalize with and disrupt PML-associated nuclear bodies at very early times in infected permissive cells.</title>
        <authorList>
            <person name="Ahn J.H."/>
            <person name="Hayward G.S."/>
        </authorList>
    </citation>
    <scope>SUBCELLULAR LOCATION</scope>
    <scope>FUNCTION</scope>
</reference>
<reference key="5">
    <citation type="journal article" date="2002" name="Proc. Natl. Acad. Sci. U.S.A.">
        <title>Effect of the human cytomegalovirus IE86 protein on expression of E2F-responsive genes: a DNA microarray analysis.</title>
        <authorList>
            <person name="Song Y.J."/>
            <person name="Stinski M.F."/>
        </authorList>
    </citation>
    <scope>FUNCTION IN HOST CELL CYCLE MODULATION</scope>
</reference>
<reference key="6">
    <citation type="journal article" date="2011" name="Cell Res.">
        <title>Host-viral effects of chromatin assembly factor 1 interaction with HCMV IE2.</title>
        <authorList>
            <person name="Lee S.B."/>
            <person name="Lee C.F."/>
            <person name="Ou D.S."/>
            <person name="Dulal K."/>
            <person name="Chang L.H."/>
            <person name="Ma C.H."/>
            <person name="Huang C.F."/>
            <person name="Zhu H."/>
            <person name="Lin Y.S."/>
            <person name="Juan L.J."/>
        </authorList>
    </citation>
    <scope>INTERACTION WITH HOST CHAF1A</scope>
</reference>
<reference key="7">
    <citation type="journal article" date="2020" name="PLoS Pathog.">
        <title>Human cytomegalovirus IE2 drives transcription initiation from a select subset of late infection viral promoters by host RNA polymerase II.</title>
        <authorList>
            <person name="Li M."/>
            <person name="Ball C.B."/>
            <person name="Collins G."/>
            <person name="Hu Q."/>
            <person name="Luse D.S."/>
            <person name="Price D.H."/>
            <person name="Meier J.L."/>
        </authorList>
    </citation>
    <scope>FUNCTION</scope>
</reference>
<reference key="8">
    <citation type="journal article" date="2022" name="MBio">
        <title>Human Cytomegalovirus IE2 Both Activates and Represses Initiation and Modulates Elongation in a Context-Dependent Manner.</title>
        <authorList>
            <person name="Ball C.B."/>
            <person name="Li M."/>
            <person name="Parida M."/>
            <person name="Hu Q."/>
            <person name="Ince D."/>
            <person name="Collins G.S."/>
            <person name="Meier J.L."/>
            <person name="Price D.H."/>
        </authorList>
    </citation>
    <scope>FUNCTION</scope>
    <scope>INTERACTION WITH HOST TBP</scope>
</reference>
<reference key="9">
    <citation type="journal article" date="2022" name="Microbiol. Spectr.">
        <title>The Interferon-Inducible Human PLSCR1 Protein Is a Restriction Factor of Human Cytomegalovirus.</title>
        <authorList>
            <person name="Sadanari H."/>
            <person name="Takemoto M."/>
            <person name="Ishida T."/>
            <person name="Otagiri H."/>
            <person name="Daikoku T."/>
            <person name="Murayama T."/>
            <person name="Kusano S."/>
        </authorList>
    </citation>
    <scope>FUNCTION</scope>
    <scope>INTERACTION WITH HOST PLSCR1</scope>
</reference>
<proteinExistence type="evidence at protein level"/>
<name>VIE2_HCMVT</name>
<organismHost>
    <name type="scientific">Homo sapiens</name>
    <name type="common">Human</name>
    <dbReference type="NCBI Taxonomy" id="9606"/>
</organismHost>
<feature type="chain" id="PRO_0000417855" description="Viral transcription factor IE2">
    <location>
        <begin position="1"/>
        <end position="579"/>
    </location>
</feature>
<feature type="region of interest" description="Disordered" evidence="3">
    <location>
        <begin position="1"/>
        <end position="30"/>
    </location>
</feature>
<feature type="region of interest" description="Disordered" evidence="3">
    <location>
        <begin position="99"/>
        <end position="161"/>
    </location>
</feature>
<feature type="region of interest" description="Non-covalent SUMO1 binding region (SIM)" evidence="1">
    <location>
        <begin position="200"/>
        <end position="208"/>
    </location>
</feature>
<feature type="region of interest" description="Disordered" evidence="3">
    <location>
        <begin position="206"/>
        <end position="335"/>
    </location>
</feature>
<feature type="short sequence motif" description="SUMO-interacting motif 1/SIM1" evidence="2">
    <location>
        <begin position="199"/>
        <end position="202"/>
    </location>
</feature>
<feature type="short sequence motif" description="SUMO-interacting motif 1/SIM2" evidence="2">
    <location>
        <begin position="409"/>
        <end position="412"/>
    </location>
</feature>
<feature type="short sequence motif" description="SUMO-interacting motif 1/SIM3" evidence="2">
    <location>
        <begin position="500"/>
        <end position="503"/>
    </location>
</feature>
<feature type="compositionally biased region" description="Basic and acidic residues" evidence="3">
    <location>
        <begin position="1"/>
        <end position="11"/>
    </location>
</feature>
<feature type="compositionally biased region" description="Polar residues" evidence="3">
    <location>
        <begin position="99"/>
        <end position="133"/>
    </location>
</feature>
<feature type="compositionally biased region" description="Low complexity" evidence="3">
    <location>
        <begin position="216"/>
        <end position="236"/>
    </location>
</feature>
<feature type="compositionally biased region" description="Low complexity" evidence="3">
    <location>
        <begin position="259"/>
        <end position="270"/>
    </location>
</feature>
<feature type="compositionally biased region" description="Low complexity" evidence="3">
    <location>
        <begin position="301"/>
        <end position="316"/>
    </location>
</feature>
<feature type="modified residue" description="Phosphoserine" evidence="2">
    <location>
        <position position="203"/>
    </location>
</feature>
<feature type="modified residue" description="Phosphoserine" evidence="2">
    <location>
        <position position="205"/>
    </location>
</feature>
<feature type="cross-link" description="Glycyl lysine isopeptide (Lys-Gly) (interchain with G-Cter in SUMO)" evidence="1">
    <location>
        <position position="175"/>
    </location>
</feature>
<feature type="cross-link" description="Glycyl lysine isopeptide (Lys-Gly) (interchain with G-Cter in SUMO)" evidence="1">
    <location>
        <position position="180"/>
    </location>
</feature>
<evidence type="ECO:0000250" key="1"/>
<evidence type="ECO:0000250" key="2">
    <source>
        <dbReference type="UniProtKB" id="P19893"/>
    </source>
</evidence>
<evidence type="ECO:0000256" key="3">
    <source>
        <dbReference type="SAM" id="MobiDB-lite"/>
    </source>
</evidence>
<evidence type="ECO:0000269" key="4">
    <source>
    </source>
</evidence>
<evidence type="ECO:0000269" key="5">
    <source>
    </source>
</evidence>
<evidence type="ECO:0000269" key="6">
    <source>
    </source>
</evidence>
<evidence type="ECO:0000269" key="7">
    <source>
    </source>
</evidence>
<evidence type="ECO:0000269" key="8">
    <source>
    </source>
</evidence>
<evidence type="ECO:0000269" key="9">
    <source>
    </source>
</evidence>
<evidence type="ECO:0000269" key="10">
    <source>
    </source>
</evidence>
<evidence type="ECO:0000305" key="11"/>
<protein>
    <recommendedName>
        <fullName>Viral transcription factor IE2</fullName>
        <shortName>IE2</shortName>
    </recommendedName>
    <alternativeName>
        <fullName>Protein UL122</fullName>
    </alternativeName>
</protein>
<comment type="function">
    <text evidence="4 6 7 8 10">Stimulates viral early and late gene expression and thus play a crucial role in the regulation of productive infection (PubMed:35138119). Selectively drives host RNA Pol II transcription initiation at a subset of viral early-late and late promoters without substantially affecting Pol II transcription of expressed host genes (PubMed:32251483). Mechanistically, forms a repressive complex at the major immediate-early promoter region involving direct association with host nucleosomes and TBP (PubMed:35579393). Concerning activation, stimulates transcription by binding nearby, but not within, core promoter regions (PubMed:35579393). In addition, activates quiescent cells to reenter the cell cycle and up-regulates several E2F-responsive genes, which are responsible for pushing the cell into S phase. In S-phase, inhibits cellular DNA synthesis and blocks further cell cycle progression.</text>
</comment>
<comment type="subunit">
    <text evidence="5 7 8 9">Interacts with host SUMO-modified form of TATA-binding protein (TBP)-associated factor 12/TAF12 in a SIM-dependent manner; this interaction increases the transactivation activity of IE2. Interacts with host CHAF1A. Interacts with several components of the host transcriptional machinery including TBP, TF2B and CREB1 (PubMed:35579393, PubMed:8277274). Interacts with host DNA replication licensing factor MCM3. Interacts with host PLSCR1; this interaction inhibits IE2 transactivating activity (PubMed:35138119).</text>
</comment>
<comment type="subcellular location">
    <subcellularLocation>
        <location evidence="10">Host nucleus</location>
    </subcellularLocation>
    <text>Colocalizes with host PML-associated nuclear bodies.</text>
</comment>
<comment type="domain">
    <text>The SUMO-interacting motif (SIM) is required for efficient transactivation function.</text>
</comment>
<comment type="PTM">
    <text evidence="2">Phosphorylated by host CK2 at Ser-203 and Ser-205; leading to enhanced SUMOylation.</text>
</comment>
<comment type="PTM">
    <text evidence="2">SUMOylated; SUMOylation is enhanced when IE2 is phosphorylated by host CK2. The sumoylation is necessary for efficient replication of the virus and thus for the function of this viral transcription factor.</text>
</comment>
<comment type="similarity">
    <text evidence="11">Belongs to the HHV-5 IE2 protein family.</text>
</comment>
<organism>
    <name type="scientific">Human cytomegalovirus (strain Towne)</name>
    <name type="common">HHV-5</name>
    <name type="synonym">Human herpesvirus 5</name>
    <dbReference type="NCBI Taxonomy" id="10363"/>
    <lineage>
        <taxon>Viruses</taxon>
        <taxon>Duplodnaviria</taxon>
        <taxon>Heunggongvirae</taxon>
        <taxon>Peploviricota</taxon>
        <taxon>Herviviricetes</taxon>
        <taxon>Herpesvirales</taxon>
        <taxon>Orthoherpesviridae</taxon>
        <taxon>Betaherpesvirinae</taxon>
        <taxon>Cytomegalovirus</taxon>
        <taxon>Cytomegalovirus humanbeta5</taxon>
        <taxon>Human cytomegalovirus</taxon>
    </lineage>
</organism>